<protein>
    <recommendedName>
        <fullName evidence="1">DNA-directed RNA polymerase subunit omega</fullName>
        <shortName evidence="1">RNAP omega subunit</shortName>
        <ecNumber evidence="1">2.7.7.6</ecNumber>
    </recommendedName>
    <alternativeName>
        <fullName evidence="1">RNA polymerase omega subunit</fullName>
    </alternativeName>
    <alternativeName>
        <fullName evidence="1">Transcriptase subunit omega</fullName>
    </alternativeName>
</protein>
<accession>A1V9Q4</accession>
<comment type="function">
    <text evidence="1">Promotes RNA polymerase assembly. Latches the N- and C-terminal regions of the beta' subunit thereby facilitating its interaction with the beta and alpha subunits.</text>
</comment>
<comment type="catalytic activity">
    <reaction evidence="1">
        <text>RNA(n) + a ribonucleoside 5'-triphosphate = RNA(n+1) + diphosphate</text>
        <dbReference type="Rhea" id="RHEA:21248"/>
        <dbReference type="Rhea" id="RHEA-COMP:14527"/>
        <dbReference type="Rhea" id="RHEA-COMP:17342"/>
        <dbReference type="ChEBI" id="CHEBI:33019"/>
        <dbReference type="ChEBI" id="CHEBI:61557"/>
        <dbReference type="ChEBI" id="CHEBI:140395"/>
        <dbReference type="EC" id="2.7.7.6"/>
    </reaction>
</comment>
<comment type="subunit">
    <text evidence="1">The RNAP catalytic core consists of 2 alpha, 1 beta, 1 beta' and 1 omega subunit. When a sigma factor is associated with the core the holoenzyme is formed, which can initiate transcription.</text>
</comment>
<comment type="similarity">
    <text evidence="1">Belongs to the RNA polymerase subunit omega family.</text>
</comment>
<keyword id="KW-0240">DNA-directed RNA polymerase</keyword>
<keyword id="KW-0548">Nucleotidyltransferase</keyword>
<keyword id="KW-0804">Transcription</keyword>
<keyword id="KW-0808">Transferase</keyword>
<reference key="1">
    <citation type="journal article" date="2009" name="Environ. Microbiol.">
        <title>Contribution of mobile genetic elements to Desulfovibrio vulgaris genome plasticity.</title>
        <authorList>
            <person name="Walker C.B."/>
            <person name="Stolyar S."/>
            <person name="Chivian D."/>
            <person name="Pinel N."/>
            <person name="Gabster J.A."/>
            <person name="Dehal P.S."/>
            <person name="He Z."/>
            <person name="Yang Z.K."/>
            <person name="Yen H.C."/>
            <person name="Zhou J."/>
            <person name="Wall J.D."/>
            <person name="Hazen T.C."/>
            <person name="Arkin A.P."/>
            <person name="Stahl D.A."/>
        </authorList>
    </citation>
    <scope>NUCLEOTIDE SEQUENCE [LARGE SCALE GENOMIC DNA]</scope>
    <source>
        <strain>DP4</strain>
    </source>
</reference>
<evidence type="ECO:0000255" key="1">
    <source>
        <dbReference type="HAMAP-Rule" id="MF_00366"/>
    </source>
</evidence>
<sequence length="77" mass="8851">MARITVEDCQKRIDNRFLLVQMAIKRVQQYREGYEPLVDSKNKEVVTALREIAAGKVMPEDLALYRPAEGEEMPVAE</sequence>
<proteinExistence type="inferred from homology"/>
<gene>
    <name evidence="1" type="primary">rpoZ</name>
    <name type="ordered locus">Dvul_0146</name>
</gene>
<name>RPOZ_NITV4</name>
<dbReference type="EC" id="2.7.7.6" evidence="1"/>
<dbReference type="EMBL" id="CP000527">
    <property type="protein sequence ID" value="ABM27170.1"/>
    <property type="molecule type" value="Genomic_DNA"/>
</dbReference>
<dbReference type="RefSeq" id="WP_010940500.1">
    <property type="nucleotide sequence ID" value="NC_008751.1"/>
</dbReference>
<dbReference type="SMR" id="A1V9Q4"/>
<dbReference type="KEGG" id="dvl:Dvul_0146"/>
<dbReference type="HOGENOM" id="CLU_125406_5_1_7"/>
<dbReference type="Proteomes" id="UP000009173">
    <property type="component" value="Chromosome"/>
</dbReference>
<dbReference type="GO" id="GO:0000428">
    <property type="term" value="C:DNA-directed RNA polymerase complex"/>
    <property type="evidence" value="ECO:0007669"/>
    <property type="project" value="UniProtKB-KW"/>
</dbReference>
<dbReference type="GO" id="GO:0003677">
    <property type="term" value="F:DNA binding"/>
    <property type="evidence" value="ECO:0007669"/>
    <property type="project" value="UniProtKB-UniRule"/>
</dbReference>
<dbReference type="GO" id="GO:0003899">
    <property type="term" value="F:DNA-directed RNA polymerase activity"/>
    <property type="evidence" value="ECO:0007669"/>
    <property type="project" value="UniProtKB-UniRule"/>
</dbReference>
<dbReference type="GO" id="GO:0006351">
    <property type="term" value="P:DNA-templated transcription"/>
    <property type="evidence" value="ECO:0007669"/>
    <property type="project" value="UniProtKB-UniRule"/>
</dbReference>
<dbReference type="Gene3D" id="3.90.940.10">
    <property type="match status" value="1"/>
</dbReference>
<dbReference type="HAMAP" id="MF_00366">
    <property type="entry name" value="RNApol_bact_RpoZ"/>
    <property type="match status" value="1"/>
</dbReference>
<dbReference type="InterPro" id="IPR003716">
    <property type="entry name" value="DNA-dir_RNA_pol_omega"/>
</dbReference>
<dbReference type="InterPro" id="IPR006110">
    <property type="entry name" value="Pol_omega/Rpo6/RPB6"/>
</dbReference>
<dbReference type="InterPro" id="IPR036161">
    <property type="entry name" value="RPB6/omega-like_sf"/>
</dbReference>
<dbReference type="NCBIfam" id="TIGR00690">
    <property type="entry name" value="rpoZ"/>
    <property type="match status" value="1"/>
</dbReference>
<dbReference type="PANTHER" id="PTHR34476">
    <property type="entry name" value="DNA-DIRECTED RNA POLYMERASE SUBUNIT OMEGA"/>
    <property type="match status" value="1"/>
</dbReference>
<dbReference type="PANTHER" id="PTHR34476:SF1">
    <property type="entry name" value="DNA-DIRECTED RNA POLYMERASE SUBUNIT OMEGA"/>
    <property type="match status" value="1"/>
</dbReference>
<dbReference type="Pfam" id="PF01192">
    <property type="entry name" value="RNA_pol_Rpb6"/>
    <property type="match status" value="1"/>
</dbReference>
<dbReference type="SMART" id="SM01409">
    <property type="entry name" value="RNA_pol_Rpb6"/>
    <property type="match status" value="1"/>
</dbReference>
<dbReference type="SUPFAM" id="SSF63562">
    <property type="entry name" value="RPB6/omega subunit-like"/>
    <property type="match status" value="1"/>
</dbReference>
<feature type="chain" id="PRO_1000005920" description="DNA-directed RNA polymerase subunit omega">
    <location>
        <begin position="1"/>
        <end position="77"/>
    </location>
</feature>
<organism>
    <name type="scientific">Nitratidesulfovibrio vulgaris (strain DP4)</name>
    <name type="common">Desulfovibrio vulgaris</name>
    <dbReference type="NCBI Taxonomy" id="391774"/>
    <lineage>
        <taxon>Bacteria</taxon>
        <taxon>Pseudomonadati</taxon>
        <taxon>Thermodesulfobacteriota</taxon>
        <taxon>Desulfovibrionia</taxon>
        <taxon>Desulfovibrionales</taxon>
        <taxon>Desulfovibrionaceae</taxon>
        <taxon>Nitratidesulfovibrio</taxon>
    </lineage>
</organism>